<feature type="chain" id="PRO_0000322882" description="Recombination protein RecR">
    <location>
        <begin position="1"/>
        <end position="205"/>
    </location>
</feature>
<feature type="domain" description="Toprim" evidence="1">
    <location>
        <begin position="81"/>
        <end position="177"/>
    </location>
</feature>
<feature type="zinc finger region" description="C4-type" evidence="1">
    <location>
        <begin position="58"/>
        <end position="73"/>
    </location>
</feature>
<protein>
    <recommendedName>
        <fullName evidence="1">Recombination protein RecR</fullName>
    </recommendedName>
</protein>
<keyword id="KW-0227">DNA damage</keyword>
<keyword id="KW-0233">DNA recombination</keyword>
<keyword id="KW-0234">DNA repair</keyword>
<keyword id="KW-0479">Metal-binding</keyword>
<keyword id="KW-1185">Reference proteome</keyword>
<keyword id="KW-0862">Zinc</keyword>
<keyword id="KW-0863">Zinc-finger</keyword>
<organism>
    <name type="scientific">Cytophaga hutchinsonii (strain ATCC 33406 / DSM 1761 / CIP 103989 / NBRC 15051 / NCIMB 9469 / D465)</name>
    <dbReference type="NCBI Taxonomy" id="269798"/>
    <lineage>
        <taxon>Bacteria</taxon>
        <taxon>Pseudomonadati</taxon>
        <taxon>Bacteroidota</taxon>
        <taxon>Cytophagia</taxon>
        <taxon>Cytophagales</taxon>
        <taxon>Cytophagaceae</taxon>
        <taxon>Cytophaga</taxon>
    </lineage>
</organism>
<reference key="1">
    <citation type="journal article" date="2007" name="Appl. Environ. Microbiol.">
        <title>Genome sequence of the cellulolytic gliding bacterium Cytophaga hutchinsonii.</title>
        <authorList>
            <person name="Xie G."/>
            <person name="Bruce D.C."/>
            <person name="Challacombe J.F."/>
            <person name="Chertkov O."/>
            <person name="Detter J.C."/>
            <person name="Gilna P."/>
            <person name="Han C.S."/>
            <person name="Lucas S."/>
            <person name="Misra M."/>
            <person name="Myers G.L."/>
            <person name="Richardson P."/>
            <person name="Tapia R."/>
            <person name="Thayer N."/>
            <person name="Thompson L.S."/>
            <person name="Brettin T.S."/>
            <person name="Henrissat B."/>
            <person name="Wilson D.B."/>
            <person name="McBride M.J."/>
        </authorList>
    </citation>
    <scope>NUCLEOTIDE SEQUENCE [LARGE SCALE GENOMIC DNA]</scope>
    <source>
        <strain>ATCC 33406 / DSM 1761 / JCM 20678 / CIP 103989 / IAM 12607 / NBRC 15051 / NCIMB 9469 / D465</strain>
    </source>
</reference>
<proteinExistence type="inferred from homology"/>
<accession>Q11W94</accession>
<evidence type="ECO:0000255" key="1">
    <source>
        <dbReference type="HAMAP-Rule" id="MF_00017"/>
    </source>
</evidence>
<name>RECR_CYTH3</name>
<dbReference type="EMBL" id="CP000383">
    <property type="protein sequence ID" value="ABG58322.1"/>
    <property type="molecule type" value="Genomic_DNA"/>
</dbReference>
<dbReference type="RefSeq" id="WP_011584437.1">
    <property type="nucleotide sequence ID" value="NC_008255.1"/>
</dbReference>
<dbReference type="SMR" id="Q11W94"/>
<dbReference type="STRING" id="269798.CHU_1045"/>
<dbReference type="KEGG" id="chu:CHU_1045"/>
<dbReference type="eggNOG" id="COG0353">
    <property type="taxonomic scope" value="Bacteria"/>
</dbReference>
<dbReference type="HOGENOM" id="CLU_060739_1_1_10"/>
<dbReference type="OrthoDB" id="9802672at2"/>
<dbReference type="Proteomes" id="UP000001822">
    <property type="component" value="Chromosome"/>
</dbReference>
<dbReference type="GO" id="GO:0003677">
    <property type="term" value="F:DNA binding"/>
    <property type="evidence" value="ECO:0007669"/>
    <property type="project" value="UniProtKB-UniRule"/>
</dbReference>
<dbReference type="GO" id="GO:0008270">
    <property type="term" value="F:zinc ion binding"/>
    <property type="evidence" value="ECO:0007669"/>
    <property type="project" value="UniProtKB-KW"/>
</dbReference>
<dbReference type="GO" id="GO:0006310">
    <property type="term" value="P:DNA recombination"/>
    <property type="evidence" value="ECO:0007669"/>
    <property type="project" value="UniProtKB-UniRule"/>
</dbReference>
<dbReference type="GO" id="GO:0006281">
    <property type="term" value="P:DNA repair"/>
    <property type="evidence" value="ECO:0007669"/>
    <property type="project" value="UniProtKB-UniRule"/>
</dbReference>
<dbReference type="CDD" id="cd01025">
    <property type="entry name" value="TOPRIM_recR"/>
    <property type="match status" value="1"/>
</dbReference>
<dbReference type="Gene3D" id="3.30.60.80">
    <property type="match status" value="1"/>
</dbReference>
<dbReference type="Gene3D" id="3.40.1360.10">
    <property type="match status" value="1"/>
</dbReference>
<dbReference type="Gene3D" id="6.10.250.240">
    <property type="match status" value="1"/>
</dbReference>
<dbReference type="Gene3D" id="1.10.8.420">
    <property type="entry name" value="RecR Domain 1"/>
    <property type="match status" value="1"/>
</dbReference>
<dbReference type="HAMAP" id="MF_00017">
    <property type="entry name" value="RecR"/>
    <property type="match status" value="1"/>
</dbReference>
<dbReference type="InterPro" id="IPR000093">
    <property type="entry name" value="DNA_Rcmb_RecR"/>
</dbReference>
<dbReference type="InterPro" id="IPR023627">
    <property type="entry name" value="Rcmb_RecR"/>
</dbReference>
<dbReference type="InterPro" id="IPR015967">
    <property type="entry name" value="Rcmb_RecR_Znf"/>
</dbReference>
<dbReference type="InterPro" id="IPR006171">
    <property type="entry name" value="TOPRIM_dom"/>
</dbReference>
<dbReference type="InterPro" id="IPR034137">
    <property type="entry name" value="TOPRIM_RecR"/>
</dbReference>
<dbReference type="NCBIfam" id="TIGR00615">
    <property type="entry name" value="recR"/>
    <property type="match status" value="1"/>
</dbReference>
<dbReference type="PANTHER" id="PTHR30446">
    <property type="entry name" value="RECOMBINATION PROTEIN RECR"/>
    <property type="match status" value="1"/>
</dbReference>
<dbReference type="PANTHER" id="PTHR30446:SF0">
    <property type="entry name" value="RECOMBINATION PROTEIN RECR"/>
    <property type="match status" value="1"/>
</dbReference>
<dbReference type="Pfam" id="PF21175">
    <property type="entry name" value="RecR_C"/>
    <property type="match status" value="1"/>
</dbReference>
<dbReference type="Pfam" id="PF21176">
    <property type="entry name" value="RecR_HhH"/>
    <property type="match status" value="1"/>
</dbReference>
<dbReference type="Pfam" id="PF02132">
    <property type="entry name" value="RecR_ZnF"/>
    <property type="match status" value="1"/>
</dbReference>
<dbReference type="Pfam" id="PF13662">
    <property type="entry name" value="Toprim_4"/>
    <property type="match status" value="1"/>
</dbReference>
<dbReference type="SMART" id="SM00493">
    <property type="entry name" value="TOPRIM"/>
    <property type="match status" value="1"/>
</dbReference>
<dbReference type="SUPFAM" id="SSF111304">
    <property type="entry name" value="Recombination protein RecR"/>
    <property type="match status" value="1"/>
</dbReference>
<dbReference type="PROSITE" id="PS01300">
    <property type="entry name" value="RECR"/>
    <property type="match status" value="1"/>
</dbReference>
<dbReference type="PROSITE" id="PS50880">
    <property type="entry name" value="TOPRIM"/>
    <property type="match status" value="1"/>
</dbReference>
<sequence length="205" mass="22997">MNFPSKLLEDAVLEISKLPGIGKKTALRLVLHLLKKESKESESLANALLNARENIRYCKKCHTISDHELCAICTSNKRDKRVVCIVEDIRDVLAIENTNQYFGVYHVIGGVISPMERIGPDQLNINSLIERVITDTEIKEIILGLSPTMEGDTTAFFITKKLKSYPIKISTIARGIPFGGELEYMDEVTLGRSIATRTLFETKED</sequence>
<gene>
    <name evidence="1" type="primary">recR</name>
    <name type="ordered locus">CHU_1045</name>
</gene>
<comment type="function">
    <text evidence="1">May play a role in DNA repair. It seems to be involved in an RecBC-independent recombinational process of DNA repair. It may act with RecF and RecO.</text>
</comment>
<comment type="similarity">
    <text evidence="1">Belongs to the RecR family.</text>
</comment>